<comment type="function">
    <text evidence="1">Bidirectionally degrades single-stranded DNA into large acid-insoluble oligonucleotides, which are then degraded further into small acid-soluble oligonucleotides.</text>
</comment>
<comment type="catalytic activity">
    <reaction evidence="1">
        <text>Exonucleolytic cleavage in either 5'- to 3'- or 3'- to 5'-direction to yield nucleoside 5'-phosphates.</text>
        <dbReference type="EC" id="3.1.11.6"/>
    </reaction>
</comment>
<comment type="subunit">
    <text evidence="1">Heterooligomer composed of large and small subunits.</text>
</comment>
<comment type="subcellular location">
    <subcellularLocation>
        <location evidence="1">Cytoplasm</location>
    </subcellularLocation>
</comment>
<comment type="similarity">
    <text evidence="1">Belongs to the XseA family.</text>
</comment>
<organism>
    <name type="scientific">Campylobacter hominis (strain ATCC BAA-381 / DSM 21671 / CCUG 45161 / LMG 19568 / NCTC 13146 / CH001A)</name>
    <dbReference type="NCBI Taxonomy" id="360107"/>
    <lineage>
        <taxon>Bacteria</taxon>
        <taxon>Pseudomonadati</taxon>
        <taxon>Campylobacterota</taxon>
        <taxon>Epsilonproteobacteria</taxon>
        <taxon>Campylobacterales</taxon>
        <taxon>Campylobacteraceae</taxon>
        <taxon>Campylobacter</taxon>
    </lineage>
</organism>
<name>EX7L_CAMHC</name>
<reference key="1">
    <citation type="submission" date="2007-07" db="EMBL/GenBank/DDBJ databases">
        <title>Complete genome sequence of Campylobacter hominis ATCC BAA-381, a commensal isolated from the human gastrointestinal tract.</title>
        <authorList>
            <person name="Fouts D.E."/>
            <person name="Mongodin E.F."/>
            <person name="Puiu D."/>
            <person name="Sebastian Y."/>
            <person name="Miller W.G."/>
            <person name="Mandrell R.E."/>
            <person name="Nelson K.E."/>
        </authorList>
    </citation>
    <scope>NUCLEOTIDE SEQUENCE [LARGE SCALE GENOMIC DNA]</scope>
    <source>
        <strain>ATCC BAA-381 / DSM 21671 / CCUG 45161 / LMG 19568 / NCTC 13146 / CH001A</strain>
    </source>
</reference>
<sequence length="387" mass="43029">MTVSELNEQAKSLLESHFPSIEVVGEISRFTRQPTSGHWYFTLKDEKASISCAMFKSTALRVKFIPKDGLKVIITGKVSIYSPTGNYQIIAASMKLAGEGELEAKFSALKQKLSDEGLFAEEYKKPLPKFPQKIAFLTSLSSAAYQDMLRVARDRFALVKIDAYSVFVQGENTASSVISALKTADKKDYDCIIIARGGGSKEDLWGFNDENLARAIFAAHTPVISAIGHEIDFSISDFVADHRSLTPTAAMMDLLPDVNTLLQDLSGADNFLINFINSCFKKCENALNVANLSLKTKSVDSKILKFENDLREGESKLENFIKFRLSNFENRLNLNTQILKSKAKFFEITKNLVSISKDGKIVKLKDLKSGDNFEISSQEISKQAKIL</sequence>
<evidence type="ECO:0000255" key="1">
    <source>
        <dbReference type="HAMAP-Rule" id="MF_00378"/>
    </source>
</evidence>
<gene>
    <name evidence="1" type="primary">xseA</name>
    <name type="ordered locus">CHAB381_1293</name>
</gene>
<dbReference type="EC" id="3.1.11.6" evidence="1"/>
<dbReference type="EMBL" id="CP000776">
    <property type="protein sequence ID" value="ABS51752.1"/>
    <property type="molecule type" value="Genomic_DNA"/>
</dbReference>
<dbReference type="RefSeq" id="WP_012109145.1">
    <property type="nucleotide sequence ID" value="NC_009714.1"/>
</dbReference>
<dbReference type="SMR" id="A7I2V3"/>
<dbReference type="STRING" id="360107.CHAB381_1293"/>
<dbReference type="KEGG" id="cha:CHAB381_1293"/>
<dbReference type="eggNOG" id="COG1570">
    <property type="taxonomic scope" value="Bacteria"/>
</dbReference>
<dbReference type="HOGENOM" id="CLU_023625_2_0_7"/>
<dbReference type="OrthoDB" id="9802795at2"/>
<dbReference type="Proteomes" id="UP000002407">
    <property type="component" value="Chromosome"/>
</dbReference>
<dbReference type="GO" id="GO:0005737">
    <property type="term" value="C:cytoplasm"/>
    <property type="evidence" value="ECO:0007669"/>
    <property type="project" value="UniProtKB-SubCell"/>
</dbReference>
<dbReference type="GO" id="GO:0009318">
    <property type="term" value="C:exodeoxyribonuclease VII complex"/>
    <property type="evidence" value="ECO:0007669"/>
    <property type="project" value="InterPro"/>
</dbReference>
<dbReference type="GO" id="GO:0008855">
    <property type="term" value="F:exodeoxyribonuclease VII activity"/>
    <property type="evidence" value="ECO:0007669"/>
    <property type="project" value="UniProtKB-UniRule"/>
</dbReference>
<dbReference type="GO" id="GO:0003676">
    <property type="term" value="F:nucleic acid binding"/>
    <property type="evidence" value="ECO:0007669"/>
    <property type="project" value="InterPro"/>
</dbReference>
<dbReference type="GO" id="GO:0006308">
    <property type="term" value="P:DNA catabolic process"/>
    <property type="evidence" value="ECO:0007669"/>
    <property type="project" value="UniProtKB-UniRule"/>
</dbReference>
<dbReference type="CDD" id="cd04489">
    <property type="entry name" value="ExoVII_LU_OBF"/>
    <property type="match status" value="1"/>
</dbReference>
<dbReference type="HAMAP" id="MF_00378">
    <property type="entry name" value="Exonuc_7_L"/>
    <property type="match status" value="1"/>
</dbReference>
<dbReference type="InterPro" id="IPR003753">
    <property type="entry name" value="Exonuc_VII_L"/>
</dbReference>
<dbReference type="InterPro" id="IPR020579">
    <property type="entry name" value="Exonuc_VII_lsu_C"/>
</dbReference>
<dbReference type="InterPro" id="IPR025824">
    <property type="entry name" value="OB-fold_nuc-bd_dom"/>
</dbReference>
<dbReference type="NCBIfam" id="TIGR00237">
    <property type="entry name" value="xseA"/>
    <property type="match status" value="1"/>
</dbReference>
<dbReference type="PANTHER" id="PTHR30008">
    <property type="entry name" value="EXODEOXYRIBONUCLEASE 7 LARGE SUBUNIT"/>
    <property type="match status" value="1"/>
</dbReference>
<dbReference type="PANTHER" id="PTHR30008:SF0">
    <property type="entry name" value="EXODEOXYRIBONUCLEASE 7 LARGE SUBUNIT"/>
    <property type="match status" value="1"/>
</dbReference>
<dbReference type="Pfam" id="PF02601">
    <property type="entry name" value="Exonuc_VII_L"/>
    <property type="match status" value="1"/>
</dbReference>
<dbReference type="Pfam" id="PF13742">
    <property type="entry name" value="tRNA_anti_2"/>
    <property type="match status" value="1"/>
</dbReference>
<proteinExistence type="inferred from homology"/>
<keyword id="KW-0963">Cytoplasm</keyword>
<keyword id="KW-0269">Exonuclease</keyword>
<keyword id="KW-0378">Hydrolase</keyword>
<keyword id="KW-0540">Nuclease</keyword>
<keyword id="KW-1185">Reference proteome</keyword>
<protein>
    <recommendedName>
        <fullName evidence="1">Exodeoxyribonuclease 7 large subunit</fullName>
        <ecNumber evidence="1">3.1.11.6</ecNumber>
    </recommendedName>
    <alternativeName>
        <fullName evidence="1">Exodeoxyribonuclease VII large subunit</fullName>
        <shortName evidence="1">Exonuclease VII large subunit</shortName>
    </alternativeName>
</protein>
<accession>A7I2V3</accession>
<feature type="chain" id="PRO_1000048764" description="Exodeoxyribonuclease 7 large subunit">
    <location>
        <begin position="1"/>
        <end position="387"/>
    </location>
</feature>